<keyword id="KW-0238">DNA-binding</keyword>
<keyword id="KW-1185">Reference proteome</keyword>
<keyword id="KW-0804">Transcription</keyword>
<keyword id="KW-0805">Transcription regulation</keyword>
<sequence>MEYKDPMHELLSSLEQIVFKDETQKITLTHRTTSCTEIEQLRKGTGLKIDDFARVLGVSVAMVKEWESRRVKPSSAELKLMRLIQANPALSKQLME</sequence>
<gene>
    <name type="primary">yiaG</name>
    <name type="ordered locus">b3555</name>
    <name type="ordered locus">JW3524</name>
</gene>
<proteinExistence type="predicted"/>
<organism>
    <name type="scientific">Escherichia coli (strain K12)</name>
    <dbReference type="NCBI Taxonomy" id="83333"/>
    <lineage>
        <taxon>Bacteria</taxon>
        <taxon>Pseudomonadati</taxon>
        <taxon>Pseudomonadota</taxon>
        <taxon>Gammaproteobacteria</taxon>
        <taxon>Enterobacterales</taxon>
        <taxon>Enterobacteriaceae</taxon>
        <taxon>Escherichia</taxon>
    </lineage>
</organism>
<reference key="1">
    <citation type="journal article" date="1990" name="Proc. Natl. Acad. Sci. U.S.A.">
        <title>Major cold shock protein of Escherichia coli.</title>
        <authorList>
            <person name="Goldstein J."/>
            <person name="Pollitt N.S."/>
            <person name="Inouye M."/>
        </authorList>
    </citation>
    <scope>NUCLEOTIDE SEQUENCE [GENOMIC DNA]</scope>
</reference>
<reference key="2">
    <citation type="journal article" date="1994" name="Nucleic Acids Res.">
        <title>Analysis of the Escherichia coli genome. V. DNA sequence of the region from 76.0 to 81.5 minutes.</title>
        <authorList>
            <person name="Sofia H.J."/>
            <person name="Burland V."/>
            <person name="Daniels D.L."/>
            <person name="Plunkett G. III"/>
            <person name="Blattner F.R."/>
        </authorList>
    </citation>
    <scope>NUCLEOTIDE SEQUENCE [LARGE SCALE GENOMIC DNA]</scope>
    <source>
        <strain>K12 / MG1655 / ATCC 47076</strain>
    </source>
</reference>
<reference key="3">
    <citation type="journal article" date="1997" name="Science">
        <title>The complete genome sequence of Escherichia coli K-12.</title>
        <authorList>
            <person name="Blattner F.R."/>
            <person name="Plunkett G. III"/>
            <person name="Bloch C.A."/>
            <person name="Perna N.T."/>
            <person name="Burland V."/>
            <person name="Riley M."/>
            <person name="Collado-Vides J."/>
            <person name="Glasner J.D."/>
            <person name="Rode C.K."/>
            <person name="Mayhew G.F."/>
            <person name="Gregor J."/>
            <person name="Davis N.W."/>
            <person name="Kirkpatrick H.A."/>
            <person name="Goeden M.A."/>
            <person name="Rose D.J."/>
            <person name="Mau B."/>
            <person name="Shao Y."/>
        </authorList>
    </citation>
    <scope>NUCLEOTIDE SEQUENCE [LARGE SCALE GENOMIC DNA]</scope>
    <source>
        <strain>K12 / MG1655 / ATCC 47076</strain>
    </source>
</reference>
<reference key="4">
    <citation type="journal article" date="2006" name="Mol. Syst. Biol.">
        <title>Highly accurate genome sequences of Escherichia coli K-12 strains MG1655 and W3110.</title>
        <authorList>
            <person name="Hayashi K."/>
            <person name="Morooka N."/>
            <person name="Yamamoto Y."/>
            <person name="Fujita K."/>
            <person name="Isono K."/>
            <person name="Choi S."/>
            <person name="Ohtsubo E."/>
            <person name="Baba T."/>
            <person name="Wanner B.L."/>
            <person name="Mori H."/>
            <person name="Horiuchi T."/>
        </authorList>
    </citation>
    <scope>NUCLEOTIDE SEQUENCE [LARGE SCALE GENOMIC DNA]</scope>
    <source>
        <strain>K12 / W3110 / ATCC 27325 / DSM 5911</strain>
    </source>
</reference>
<accession>P0A9V5</accession>
<accession>P37668</accession>
<accession>Q2M7L6</accession>
<name>YIAG_ECOLI</name>
<protein>
    <recommendedName>
        <fullName>Uncharacterized HTH-type transcriptional regulator YiaG</fullName>
    </recommendedName>
</protein>
<feature type="chain" id="PRO_0000149766" description="Uncharacterized HTH-type transcriptional regulator YiaG">
    <location>
        <begin position="1"/>
        <end position="96"/>
    </location>
</feature>
<feature type="domain" description="HTH cro/C1-type" evidence="1">
    <location>
        <begin position="38"/>
        <end position="91"/>
    </location>
</feature>
<feature type="DNA-binding region" description="H-T-H motif" evidence="1">
    <location>
        <begin position="49"/>
        <end position="68"/>
    </location>
</feature>
<evidence type="ECO:0000255" key="1">
    <source>
        <dbReference type="PROSITE-ProRule" id="PRU00257"/>
    </source>
</evidence>
<dbReference type="EMBL" id="M30139">
    <property type="status" value="NOT_ANNOTATED_CDS"/>
    <property type="molecule type" value="Genomic_DNA"/>
</dbReference>
<dbReference type="EMBL" id="U00039">
    <property type="protein sequence ID" value="AAB18532.1"/>
    <property type="molecule type" value="Genomic_DNA"/>
</dbReference>
<dbReference type="EMBL" id="U00096">
    <property type="protein sequence ID" value="AAC76579.1"/>
    <property type="molecule type" value="Genomic_DNA"/>
</dbReference>
<dbReference type="EMBL" id="AP009048">
    <property type="protein sequence ID" value="BAE77740.1"/>
    <property type="molecule type" value="Genomic_DNA"/>
</dbReference>
<dbReference type="PIR" id="S47776">
    <property type="entry name" value="S47776"/>
</dbReference>
<dbReference type="RefSeq" id="NP_418011.1">
    <property type="nucleotide sequence ID" value="NC_000913.3"/>
</dbReference>
<dbReference type="RefSeq" id="WP_000455798.1">
    <property type="nucleotide sequence ID" value="NZ_STEB01000018.1"/>
</dbReference>
<dbReference type="SMR" id="P0A9V5"/>
<dbReference type="BioGRID" id="4262532">
    <property type="interactions" value="140"/>
</dbReference>
<dbReference type="FunCoup" id="P0A9V5">
    <property type="interactions" value="40"/>
</dbReference>
<dbReference type="IntAct" id="P0A9V5">
    <property type="interactions" value="6"/>
</dbReference>
<dbReference type="STRING" id="511145.b3555"/>
<dbReference type="jPOST" id="P0A9V5"/>
<dbReference type="PaxDb" id="511145-b3555"/>
<dbReference type="EnsemblBacteria" id="AAC76579">
    <property type="protein sequence ID" value="AAC76579"/>
    <property type="gene ID" value="b3555"/>
</dbReference>
<dbReference type="GeneID" id="948071"/>
<dbReference type="KEGG" id="ecj:JW3524"/>
<dbReference type="KEGG" id="eco:b3555"/>
<dbReference type="KEGG" id="ecoc:C3026_19270"/>
<dbReference type="PATRIC" id="fig|1411691.4.peg.3159"/>
<dbReference type="EchoBASE" id="EB2508"/>
<dbReference type="eggNOG" id="COG2944">
    <property type="taxonomic scope" value="Bacteria"/>
</dbReference>
<dbReference type="HOGENOM" id="CLU_144725_2_0_6"/>
<dbReference type="InParanoid" id="P0A9V5"/>
<dbReference type="OMA" id="MAMPEPQ"/>
<dbReference type="OrthoDB" id="9799384at2"/>
<dbReference type="PhylomeDB" id="P0A9V5"/>
<dbReference type="BioCyc" id="EcoCyc:EG12624-MONOMER"/>
<dbReference type="PRO" id="PR:P0A9V5"/>
<dbReference type="Proteomes" id="UP000000625">
    <property type="component" value="Chromosome"/>
</dbReference>
<dbReference type="GO" id="GO:0003677">
    <property type="term" value="F:DNA binding"/>
    <property type="evidence" value="ECO:0007669"/>
    <property type="project" value="UniProtKB-KW"/>
</dbReference>
<dbReference type="CDD" id="cd00093">
    <property type="entry name" value="HTH_XRE"/>
    <property type="match status" value="1"/>
</dbReference>
<dbReference type="Gene3D" id="1.10.260.40">
    <property type="entry name" value="lambda repressor-like DNA-binding domains"/>
    <property type="match status" value="1"/>
</dbReference>
<dbReference type="InterPro" id="IPR001387">
    <property type="entry name" value="Cro/C1-type_HTH"/>
</dbReference>
<dbReference type="InterPro" id="IPR052359">
    <property type="entry name" value="HTH-type_reg/antitoxin"/>
</dbReference>
<dbReference type="InterPro" id="IPR010982">
    <property type="entry name" value="Lambda_DNA-bd_dom_sf"/>
</dbReference>
<dbReference type="NCBIfam" id="NF007481">
    <property type="entry name" value="PRK10072.1"/>
    <property type="match status" value="1"/>
</dbReference>
<dbReference type="PANTHER" id="PTHR36511">
    <property type="entry name" value="MERR FAMILY BACTERIAL REGULATORY PROTEIN"/>
    <property type="match status" value="1"/>
</dbReference>
<dbReference type="PANTHER" id="PTHR36511:SF6">
    <property type="entry name" value="TRANSCRIPTIONAL REGULATOR"/>
    <property type="match status" value="1"/>
</dbReference>
<dbReference type="Pfam" id="PF01381">
    <property type="entry name" value="HTH_3"/>
    <property type="match status" value="1"/>
</dbReference>
<dbReference type="SMART" id="SM00530">
    <property type="entry name" value="HTH_XRE"/>
    <property type="match status" value="1"/>
</dbReference>
<dbReference type="SUPFAM" id="SSF47413">
    <property type="entry name" value="lambda repressor-like DNA-binding domains"/>
    <property type="match status" value="1"/>
</dbReference>
<dbReference type="PROSITE" id="PS50943">
    <property type="entry name" value="HTH_CROC1"/>
    <property type="match status" value="1"/>
</dbReference>